<sequence length="338" mass="36777">MSFIDEVKINVKSGDGGAGCVSFRREKFIPLGGPDGGDGGKGGDVIVKVSSHLSTLLDLRQHPHQKAGRGKNGMGSDRHGANGHTLEILVPQGTVIKDAETGEILADLAEPDSSMVLLKGGRGGQGNARFKTATHKAPKFAQPGEPGEERWIRMELKLMADVGLLGMPSVGKSSLIAKISAARPKIAEYHFTTLKPSLGVVQYKNYRSFVMADIPGLIEGASEGAGLGHRFLKHLERTGQLLHLLDLSWMPDRDPIAEYEAINRELALFNPELADKRQTVVVNKIDLPHVRENLKEILPYFEERGIKVFPISAATGEGIPELLDDIAFNLWGEPEETW</sequence>
<organism>
    <name type="scientific">Citrifermentans bemidjiense (strain ATCC BAA-1014 / DSM 16622 / JCM 12645 / Bem)</name>
    <name type="common">Geobacter bemidjiensis</name>
    <dbReference type="NCBI Taxonomy" id="404380"/>
    <lineage>
        <taxon>Bacteria</taxon>
        <taxon>Pseudomonadati</taxon>
        <taxon>Thermodesulfobacteriota</taxon>
        <taxon>Desulfuromonadia</taxon>
        <taxon>Geobacterales</taxon>
        <taxon>Geobacteraceae</taxon>
        <taxon>Citrifermentans</taxon>
    </lineage>
</organism>
<name>OBG_CITBB</name>
<reference key="1">
    <citation type="submission" date="2008-07" db="EMBL/GenBank/DDBJ databases">
        <title>Complete sequence of Geobacter bemidjiensis BEM.</title>
        <authorList>
            <consortium name="US DOE Joint Genome Institute"/>
            <person name="Lucas S."/>
            <person name="Copeland A."/>
            <person name="Lapidus A."/>
            <person name="Glavina del Rio T."/>
            <person name="Dalin E."/>
            <person name="Tice H."/>
            <person name="Bruce D."/>
            <person name="Goodwin L."/>
            <person name="Pitluck S."/>
            <person name="Kiss H."/>
            <person name="Brettin T."/>
            <person name="Detter J.C."/>
            <person name="Han C."/>
            <person name="Kuske C.R."/>
            <person name="Schmutz J."/>
            <person name="Larimer F."/>
            <person name="Land M."/>
            <person name="Hauser L."/>
            <person name="Kyrpides N."/>
            <person name="Lykidis A."/>
            <person name="Lovley D."/>
            <person name="Richardson P."/>
        </authorList>
    </citation>
    <scope>NUCLEOTIDE SEQUENCE [LARGE SCALE GENOMIC DNA]</scope>
    <source>
        <strain>ATCC BAA-1014 / DSM 16622 / JCM 12645 / Bem</strain>
    </source>
</reference>
<accession>B5E958</accession>
<dbReference type="EC" id="3.6.5.-" evidence="1"/>
<dbReference type="EMBL" id="CP001124">
    <property type="protein sequence ID" value="ACH37195.1"/>
    <property type="molecule type" value="Genomic_DNA"/>
</dbReference>
<dbReference type="RefSeq" id="WP_012528603.1">
    <property type="nucleotide sequence ID" value="NC_011146.1"/>
</dbReference>
<dbReference type="SMR" id="B5E958"/>
<dbReference type="STRING" id="404380.Gbem_0164"/>
<dbReference type="KEGG" id="gbm:Gbem_0164"/>
<dbReference type="eggNOG" id="COG0536">
    <property type="taxonomic scope" value="Bacteria"/>
</dbReference>
<dbReference type="HOGENOM" id="CLU_011747_2_3_7"/>
<dbReference type="OrthoDB" id="9807318at2"/>
<dbReference type="Proteomes" id="UP000008825">
    <property type="component" value="Chromosome"/>
</dbReference>
<dbReference type="GO" id="GO:0005737">
    <property type="term" value="C:cytoplasm"/>
    <property type="evidence" value="ECO:0007669"/>
    <property type="project" value="UniProtKB-SubCell"/>
</dbReference>
<dbReference type="GO" id="GO:0005525">
    <property type="term" value="F:GTP binding"/>
    <property type="evidence" value="ECO:0007669"/>
    <property type="project" value="UniProtKB-UniRule"/>
</dbReference>
<dbReference type="GO" id="GO:0003924">
    <property type="term" value="F:GTPase activity"/>
    <property type="evidence" value="ECO:0007669"/>
    <property type="project" value="UniProtKB-UniRule"/>
</dbReference>
<dbReference type="GO" id="GO:0000287">
    <property type="term" value="F:magnesium ion binding"/>
    <property type="evidence" value="ECO:0007669"/>
    <property type="project" value="InterPro"/>
</dbReference>
<dbReference type="GO" id="GO:0042254">
    <property type="term" value="P:ribosome biogenesis"/>
    <property type="evidence" value="ECO:0007669"/>
    <property type="project" value="UniProtKB-UniRule"/>
</dbReference>
<dbReference type="CDD" id="cd01898">
    <property type="entry name" value="Obg"/>
    <property type="match status" value="1"/>
</dbReference>
<dbReference type="FunFam" id="2.70.210.12:FF:000001">
    <property type="entry name" value="GTPase Obg"/>
    <property type="match status" value="1"/>
</dbReference>
<dbReference type="Gene3D" id="2.70.210.12">
    <property type="entry name" value="GTP1/OBG domain"/>
    <property type="match status" value="1"/>
</dbReference>
<dbReference type="Gene3D" id="3.40.50.300">
    <property type="entry name" value="P-loop containing nucleotide triphosphate hydrolases"/>
    <property type="match status" value="1"/>
</dbReference>
<dbReference type="HAMAP" id="MF_01454">
    <property type="entry name" value="GTPase_Obg"/>
    <property type="match status" value="1"/>
</dbReference>
<dbReference type="InterPro" id="IPR031167">
    <property type="entry name" value="G_OBG"/>
</dbReference>
<dbReference type="InterPro" id="IPR006073">
    <property type="entry name" value="GTP-bd"/>
</dbReference>
<dbReference type="InterPro" id="IPR014100">
    <property type="entry name" value="GTP-bd_Obg/CgtA"/>
</dbReference>
<dbReference type="InterPro" id="IPR006074">
    <property type="entry name" value="GTP1-OBG_CS"/>
</dbReference>
<dbReference type="InterPro" id="IPR006169">
    <property type="entry name" value="GTP1_OBG_dom"/>
</dbReference>
<dbReference type="InterPro" id="IPR036726">
    <property type="entry name" value="GTP1_OBG_dom_sf"/>
</dbReference>
<dbReference type="InterPro" id="IPR045086">
    <property type="entry name" value="OBG_GTPase"/>
</dbReference>
<dbReference type="InterPro" id="IPR027417">
    <property type="entry name" value="P-loop_NTPase"/>
</dbReference>
<dbReference type="NCBIfam" id="TIGR02729">
    <property type="entry name" value="Obg_CgtA"/>
    <property type="match status" value="1"/>
</dbReference>
<dbReference type="NCBIfam" id="NF008954">
    <property type="entry name" value="PRK12296.1"/>
    <property type="match status" value="1"/>
</dbReference>
<dbReference type="NCBIfam" id="NF008955">
    <property type="entry name" value="PRK12297.1"/>
    <property type="match status" value="1"/>
</dbReference>
<dbReference type="NCBIfam" id="NF008956">
    <property type="entry name" value="PRK12299.1"/>
    <property type="match status" value="1"/>
</dbReference>
<dbReference type="PANTHER" id="PTHR11702">
    <property type="entry name" value="DEVELOPMENTALLY REGULATED GTP-BINDING PROTEIN-RELATED"/>
    <property type="match status" value="1"/>
</dbReference>
<dbReference type="PANTHER" id="PTHR11702:SF31">
    <property type="entry name" value="MITOCHONDRIAL RIBOSOME-ASSOCIATED GTPASE 2"/>
    <property type="match status" value="1"/>
</dbReference>
<dbReference type="Pfam" id="PF01018">
    <property type="entry name" value="GTP1_OBG"/>
    <property type="match status" value="1"/>
</dbReference>
<dbReference type="Pfam" id="PF01926">
    <property type="entry name" value="MMR_HSR1"/>
    <property type="match status" value="1"/>
</dbReference>
<dbReference type="PIRSF" id="PIRSF002401">
    <property type="entry name" value="GTP_bd_Obg/CgtA"/>
    <property type="match status" value="1"/>
</dbReference>
<dbReference type="PRINTS" id="PR00326">
    <property type="entry name" value="GTP1OBG"/>
</dbReference>
<dbReference type="SUPFAM" id="SSF82051">
    <property type="entry name" value="Obg GTP-binding protein N-terminal domain"/>
    <property type="match status" value="1"/>
</dbReference>
<dbReference type="SUPFAM" id="SSF52540">
    <property type="entry name" value="P-loop containing nucleoside triphosphate hydrolases"/>
    <property type="match status" value="1"/>
</dbReference>
<dbReference type="PROSITE" id="PS51710">
    <property type="entry name" value="G_OBG"/>
    <property type="match status" value="1"/>
</dbReference>
<dbReference type="PROSITE" id="PS00905">
    <property type="entry name" value="GTP1_OBG"/>
    <property type="match status" value="1"/>
</dbReference>
<dbReference type="PROSITE" id="PS51883">
    <property type="entry name" value="OBG"/>
    <property type="match status" value="1"/>
</dbReference>
<feature type="chain" id="PRO_0000385950" description="GTPase Obg">
    <location>
        <begin position="1"/>
        <end position="338"/>
    </location>
</feature>
<feature type="domain" description="Obg" evidence="2">
    <location>
        <begin position="1"/>
        <end position="159"/>
    </location>
</feature>
<feature type="domain" description="OBG-type G" evidence="1">
    <location>
        <begin position="160"/>
        <end position="331"/>
    </location>
</feature>
<feature type="region of interest" description="Disordered" evidence="3">
    <location>
        <begin position="58"/>
        <end position="79"/>
    </location>
</feature>
<feature type="binding site" evidence="1">
    <location>
        <begin position="166"/>
        <end position="173"/>
    </location>
    <ligand>
        <name>GTP</name>
        <dbReference type="ChEBI" id="CHEBI:37565"/>
    </ligand>
</feature>
<feature type="binding site" evidence="1">
    <location>
        <position position="173"/>
    </location>
    <ligand>
        <name>Mg(2+)</name>
        <dbReference type="ChEBI" id="CHEBI:18420"/>
    </ligand>
</feature>
<feature type="binding site" evidence="1">
    <location>
        <begin position="191"/>
        <end position="195"/>
    </location>
    <ligand>
        <name>GTP</name>
        <dbReference type="ChEBI" id="CHEBI:37565"/>
    </ligand>
</feature>
<feature type="binding site" evidence="1">
    <location>
        <position position="193"/>
    </location>
    <ligand>
        <name>Mg(2+)</name>
        <dbReference type="ChEBI" id="CHEBI:18420"/>
    </ligand>
</feature>
<feature type="binding site" evidence="1">
    <location>
        <begin position="213"/>
        <end position="216"/>
    </location>
    <ligand>
        <name>GTP</name>
        <dbReference type="ChEBI" id="CHEBI:37565"/>
    </ligand>
</feature>
<feature type="binding site" evidence="1">
    <location>
        <begin position="283"/>
        <end position="286"/>
    </location>
    <ligand>
        <name>GTP</name>
        <dbReference type="ChEBI" id="CHEBI:37565"/>
    </ligand>
</feature>
<feature type="binding site" evidence="1">
    <location>
        <begin position="312"/>
        <end position="314"/>
    </location>
    <ligand>
        <name>GTP</name>
        <dbReference type="ChEBI" id="CHEBI:37565"/>
    </ligand>
</feature>
<protein>
    <recommendedName>
        <fullName evidence="1">GTPase Obg</fullName>
        <ecNumber evidence="1">3.6.5.-</ecNumber>
    </recommendedName>
    <alternativeName>
        <fullName evidence="1">GTP-binding protein Obg</fullName>
    </alternativeName>
</protein>
<keyword id="KW-0963">Cytoplasm</keyword>
<keyword id="KW-0342">GTP-binding</keyword>
<keyword id="KW-0378">Hydrolase</keyword>
<keyword id="KW-0460">Magnesium</keyword>
<keyword id="KW-0479">Metal-binding</keyword>
<keyword id="KW-0547">Nucleotide-binding</keyword>
<keyword id="KW-1185">Reference proteome</keyword>
<comment type="function">
    <text evidence="1">An essential GTPase which binds GTP, GDP and possibly (p)ppGpp with moderate affinity, with high nucleotide exchange rates and a fairly low GTP hydrolysis rate. Plays a role in control of the cell cycle, stress response, ribosome biogenesis and in those bacteria that undergo differentiation, in morphogenesis control.</text>
</comment>
<comment type="cofactor">
    <cofactor evidence="1">
        <name>Mg(2+)</name>
        <dbReference type="ChEBI" id="CHEBI:18420"/>
    </cofactor>
</comment>
<comment type="subunit">
    <text evidence="1">Monomer.</text>
</comment>
<comment type="subcellular location">
    <subcellularLocation>
        <location evidence="1">Cytoplasm</location>
    </subcellularLocation>
</comment>
<comment type="similarity">
    <text evidence="1">Belongs to the TRAFAC class OBG-HflX-like GTPase superfamily. OBG GTPase family.</text>
</comment>
<evidence type="ECO:0000255" key="1">
    <source>
        <dbReference type="HAMAP-Rule" id="MF_01454"/>
    </source>
</evidence>
<evidence type="ECO:0000255" key="2">
    <source>
        <dbReference type="PROSITE-ProRule" id="PRU01231"/>
    </source>
</evidence>
<evidence type="ECO:0000256" key="3">
    <source>
        <dbReference type="SAM" id="MobiDB-lite"/>
    </source>
</evidence>
<proteinExistence type="inferred from homology"/>
<gene>
    <name evidence="1" type="primary">obg</name>
    <name type="ordered locus">Gbem_0164</name>
</gene>